<evidence type="ECO:0000250" key="1"/>
<evidence type="ECO:0000255" key="2">
    <source>
        <dbReference type="PROSITE-ProRule" id="PRU01230"/>
    </source>
</evidence>
<evidence type="ECO:0000269" key="3">
    <source>
    </source>
</evidence>
<evidence type="ECO:0000305" key="4"/>
<keyword id="KW-0342">GTP-binding</keyword>
<keyword id="KW-0460">Magnesium</keyword>
<keyword id="KW-0479">Metal-binding</keyword>
<keyword id="KW-0547">Nucleotide-binding</keyword>
<keyword id="KW-1185">Reference proteome</keyword>
<keyword id="KW-0807">Transducer</keyword>
<gene>
    <name type="primary">Galphaf</name>
    <name type="synonym">G-A73B</name>
    <name type="synonym">Galpha73B</name>
    <name type="ORF">CG12232</name>
</gene>
<protein>
    <recommendedName>
        <fullName>Guanine nucleotide-binding protein G(f) subunit alpha</fullName>
    </recommendedName>
    <alternativeName>
        <fullName>G protein alpha f subunit</fullName>
    </alternativeName>
</protein>
<feature type="chain" id="PRO_0000203775" description="Guanine nucleotide-binding protein G(f) subunit alpha">
    <location>
        <begin position="1"/>
        <end position="399"/>
    </location>
</feature>
<feature type="domain" description="G-alpha" evidence="2">
    <location>
        <begin position="46"/>
        <end position="399"/>
    </location>
</feature>
<feature type="region of interest" description="G1 motif" evidence="2">
    <location>
        <begin position="49"/>
        <end position="62"/>
    </location>
</feature>
<feature type="region of interest" description="G2 motif" evidence="2">
    <location>
        <begin position="186"/>
        <end position="194"/>
    </location>
</feature>
<feature type="region of interest" description="G3 motif" evidence="2">
    <location>
        <begin position="217"/>
        <end position="226"/>
    </location>
</feature>
<feature type="region of interest" description="G4 motif" evidence="2">
    <location>
        <begin position="286"/>
        <end position="293"/>
    </location>
</feature>
<feature type="region of interest" description="G5 motif" evidence="2">
    <location>
        <begin position="369"/>
        <end position="374"/>
    </location>
</feature>
<feature type="binding site" evidence="1">
    <location>
        <begin position="54"/>
        <end position="61"/>
    </location>
    <ligand>
        <name>GTP</name>
        <dbReference type="ChEBI" id="CHEBI:37565"/>
    </ligand>
</feature>
<feature type="binding site" evidence="1">
    <location>
        <begin position="188"/>
        <end position="194"/>
    </location>
    <ligand>
        <name>GTP</name>
        <dbReference type="ChEBI" id="CHEBI:37565"/>
    </ligand>
</feature>
<feature type="binding site" evidence="1">
    <location>
        <position position="194"/>
    </location>
    <ligand>
        <name>Mg(2+)</name>
        <dbReference type="ChEBI" id="CHEBI:18420"/>
    </ligand>
</feature>
<feature type="binding site" evidence="1">
    <location>
        <begin position="221"/>
        <end position="225"/>
    </location>
    <ligand>
        <name>GTP</name>
        <dbReference type="ChEBI" id="CHEBI:37565"/>
    </ligand>
</feature>
<feature type="binding site" evidence="1">
    <location>
        <begin position="290"/>
        <end position="293"/>
    </location>
    <ligand>
        <name>GTP</name>
        <dbReference type="ChEBI" id="CHEBI:37565"/>
    </ligand>
</feature>
<feature type="binding site" evidence="1">
    <location>
        <position position="371"/>
    </location>
    <ligand>
        <name>GTP</name>
        <dbReference type="ChEBI" id="CHEBI:37565"/>
    </ligand>
</feature>
<sequence length="399" mass="46207">MKLRLLRCLRQQPAKPAAVMTHKEDQYPVSLDHHVLKDMAKGVRDTTVKILLLGTAESGKTTIIKQMRILHINGFTDDERREKIPEIYQNIHESILQLVGQMGVLGIDFGSCTSERSADYILSLPGSAPEYMNEEYCDHVTTLWNDVGIRACYDRSNEFPLLDSAKYFLDNFVRISDAEYIPSTEDILHSRKITTGISQITFRVPIPKSMGGGEQQFQMYDVGGQRDQRNKWIQVFEGIQAVLFLISCSEFDQNLREDPSQNRLQEALKLFRAVWQNRFLASAGLIVFLNKYDIMERKIRAGKHIVDYFPEYEDFCKRPQQDNCFGESDWTKMFIKQKLVDITQEPFKRHSRNQVDLGTSERECYYHFTVATDTRCIRDVFCDVQKMILSENVSSMGLF</sequence>
<dbReference type="EMBL" id="L09700">
    <property type="protein sequence ID" value="AAA28569.1"/>
    <property type="molecule type" value="mRNA"/>
</dbReference>
<dbReference type="EMBL" id="AE014296">
    <property type="protein sequence ID" value="AAF49429.2"/>
    <property type="molecule type" value="Genomic_DNA"/>
</dbReference>
<dbReference type="EMBL" id="BT064643">
    <property type="protein sequence ID" value="ACN29340.1"/>
    <property type="molecule type" value="mRNA"/>
</dbReference>
<dbReference type="PIR" id="A47460">
    <property type="entry name" value="A47460"/>
</dbReference>
<dbReference type="RefSeq" id="NP_524118.1">
    <property type="nucleotide sequence ID" value="NM_079394.3"/>
</dbReference>
<dbReference type="SMR" id="Q05337"/>
<dbReference type="BioGRID" id="65160">
    <property type="interactions" value="2"/>
</dbReference>
<dbReference type="IntAct" id="Q05337">
    <property type="interactions" value="3"/>
</dbReference>
<dbReference type="STRING" id="7227.FBpp0075113"/>
<dbReference type="PaxDb" id="7227-FBpp0075113"/>
<dbReference type="DNASU" id="39861"/>
<dbReference type="EnsemblMetazoa" id="FBtr0075354">
    <property type="protein sequence ID" value="FBpp0075113"/>
    <property type="gene ID" value="FBgn0010223"/>
</dbReference>
<dbReference type="GeneID" id="39861"/>
<dbReference type="KEGG" id="dme:Dmel_CG12232"/>
<dbReference type="AGR" id="FB:FBgn0010223"/>
<dbReference type="CTD" id="39861"/>
<dbReference type="FlyBase" id="FBgn0010223">
    <property type="gene designation" value="Galphaf"/>
</dbReference>
<dbReference type="VEuPathDB" id="VectorBase:FBgn0010223"/>
<dbReference type="eggNOG" id="KOG0099">
    <property type="taxonomic scope" value="Eukaryota"/>
</dbReference>
<dbReference type="GeneTree" id="ENSGT00940000168108"/>
<dbReference type="HOGENOM" id="CLU_014184_3_0_1"/>
<dbReference type="InParanoid" id="Q05337"/>
<dbReference type="OMA" id="NCFGESD"/>
<dbReference type="OrthoDB" id="5817230at2759"/>
<dbReference type="PhylomeDB" id="Q05337"/>
<dbReference type="Reactome" id="R-DME-170660">
    <property type="pathway name" value="Adenylate cyclase activating pathway"/>
</dbReference>
<dbReference type="Reactome" id="R-DME-170670">
    <property type="pathway name" value="Adenylate cyclase inhibitory pathway"/>
</dbReference>
<dbReference type="Reactome" id="R-DME-392851">
    <property type="pathway name" value="Prostacyclin signalling through prostacyclin receptor"/>
</dbReference>
<dbReference type="Reactome" id="R-DME-418555">
    <property type="pathway name" value="G alpha (s) signalling events"/>
</dbReference>
<dbReference type="BioGRID-ORCS" id="39861">
    <property type="hits" value="0 hits in 1 CRISPR screen"/>
</dbReference>
<dbReference type="GenomeRNAi" id="39861"/>
<dbReference type="PRO" id="PR:Q05337"/>
<dbReference type="Proteomes" id="UP000000803">
    <property type="component" value="Chromosome 3L"/>
</dbReference>
<dbReference type="Bgee" id="FBgn0010223">
    <property type="expression patterns" value="Expressed in spermathecum and 44 other cell types or tissues"/>
</dbReference>
<dbReference type="GO" id="GO:0005737">
    <property type="term" value="C:cytoplasm"/>
    <property type="evidence" value="ECO:0000318"/>
    <property type="project" value="GO_Central"/>
</dbReference>
<dbReference type="GO" id="GO:0005834">
    <property type="term" value="C:heterotrimeric G-protein complex"/>
    <property type="evidence" value="ECO:0000318"/>
    <property type="project" value="GO_Central"/>
</dbReference>
<dbReference type="GO" id="GO:0001664">
    <property type="term" value="F:G protein-coupled receptor binding"/>
    <property type="evidence" value="ECO:0000318"/>
    <property type="project" value="GO_Central"/>
</dbReference>
<dbReference type="GO" id="GO:0031683">
    <property type="term" value="F:G-protein beta/gamma-subunit complex binding"/>
    <property type="evidence" value="ECO:0000318"/>
    <property type="project" value="GO_Central"/>
</dbReference>
<dbReference type="GO" id="GO:0005525">
    <property type="term" value="F:GTP binding"/>
    <property type="evidence" value="ECO:0007669"/>
    <property type="project" value="UniProtKB-KW"/>
</dbReference>
<dbReference type="GO" id="GO:0003924">
    <property type="term" value="F:GTPase activity"/>
    <property type="evidence" value="ECO:0000318"/>
    <property type="project" value="GO_Central"/>
</dbReference>
<dbReference type="GO" id="GO:0046872">
    <property type="term" value="F:metal ion binding"/>
    <property type="evidence" value="ECO:0007669"/>
    <property type="project" value="UniProtKB-KW"/>
</dbReference>
<dbReference type="GO" id="GO:0007191">
    <property type="term" value="P:adenylate cyclase-activating dopamine receptor signaling pathway"/>
    <property type="evidence" value="ECO:0000318"/>
    <property type="project" value="GO_Central"/>
</dbReference>
<dbReference type="GO" id="GO:0007498">
    <property type="term" value="P:mesoderm development"/>
    <property type="evidence" value="ECO:0000270"/>
    <property type="project" value="FlyBase"/>
</dbReference>
<dbReference type="GO" id="GO:0035208">
    <property type="term" value="P:positive regulation of hemocyte proliferation"/>
    <property type="evidence" value="ECO:0000316"/>
    <property type="project" value="FlyBase"/>
</dbReference>
<dbReference type="GO" id="GO:0051489">
    <property type="term" value="P:regulation of filopodium assembly"/>
    <property type="evidence" value="ECO:0000315"/>
    <property type="project" value="FlyBase"/>
</dbReference>
<dbReference type="GO" id="GO:0007606">
    <property type="term" value="P:sensory perception of chemical stimulus"/>
    <property type="evidence" value="ECO:0000318"/>
    <property type="project" value="GO_Central"/>
</dbReference>
<dbReference type="CDD" id="cd00066">
    <property type="entry name" value="G-alpha"/>
    <property type="match status" value="1"/>
</dbReference>
<dbReference type="FunFam" id="1.10.400.10:FF:000010">
    <property type="entry name" value="Guanine nucleotide-binding protein alpha-13 subunit"/>
    <property type="match status" value="1"/>
</dbReference>
<dbReference type="FunFam" id="3.40.50.300:FF:001723">
    <property type="entry name" value="Guanine nucleotide-binding protein G(f) subunit alpha"/>
    <property type="match status" value="1"/>
</dbReference>
<dbReference type="Gene3D" id="1.10.400.10">
    <property type="entry name" value="GI Alpha 1, domain 2-like"/>
    <property type="match status" value="1"/>
</dbReference>
<dbReference type="Gene3D" id="3.40.50.300">
    <property type="entry name" value="P-loop containing nucleotide triphosphate hydrolases"/>
    <property type="match status" value="1"/>
</dbReference>
<dbReference type="InterPro" id="IPR001019">
    <property type="entry name" value="Gprotein_alpha_su"/>
</dbReference>
<dbReference type="InterPro" id="IPR011025">
    <property type="entry name" value="GproteinA_insert"/>
</dbReference>
<dbReference type="InterPro" id="IPR027417">
    <property type="entry name" value="P-loop_NTPase"/>
</dbReference>
<dbReference type="PANTHER" id="PTHR10218">
    <property type="entry name" value="GTP-BINDING PROTEIN ALPHA SUBUNIT"/>
    <property type="match status" value="1"/>
</dbReference>
<dbReference type="PANTHER" id="PTHR10218:SF367">
    <property type="entry name" value="GUANINE NUCLEOTIDE-BINDING PROTEIN G(F) SUBUNIT ALPHA"/>
    <property type="match status" value="1"/>
</dbReference>
<dbReference type="Pfam" id="PF00503">
    <property type="entry name" value="G-alpha"/>
    <property type="match status" value="1"/>
</dbReference>
<dbReference type="PRINTS" id="PR00318">
    <property type="entry name" value="GPROTEINA"/>
</dbReference>
<dbReference type="SMART" id="SM00275">
    <property type="entry name" value="G_alpha"/>
    <property type="match status" value="1"/>
</dbReference>
<dbReference type="SUPFAM" id="SSF52540">
    <property type="entry name" value="P-loop containing nucleoside triphosphate hydrolases"/>
    <property type="match status" value="1"/>
</dbReference>
<dbReference type="SUPFAM" id="SSF47895">
    <property type="entry name" value="Transducin (alpha subunit), insertion domain"/>
    <property type="match status" value="1"/>
</dbReference>
<dbReference type="PROSITE" id="PS51882">
    <property type="entry name" value="G_ALPHA"/>
    <property type="match status" value="1"/>
</dbReference>
<proteinExistence type="evidence at transcript level"/>
<accession>Q05337</accession>
<accession>C0P8M4</accession>
<accession>Q9VV88</accession>
<comment type="function">
    <text evidence="1">Guanine nucleotide-binding proteins (G proteins) are involved as modulators or transducers in various transmembrane signaling systems.</text>
</comment>
<comment type="subunit">
    <text>G proteins are composed of 3 units; alpha, beta and gamma. The alpha chain contains the guanine nucleotide binding site.</text>
</comment>
<comment type="tissue specificity">
    <text evidence="3">During embryogenesis, expressed primarily in the developing gut and transiently in the amnioserosa.</text>
</comment>
<comment type="developmental stage">
    <text evidence="3">Expressed primarily during embryonic, larval and early pupal development and at low levels in late pupae and adults.</text>
</comment>
<comment type="similarity">
    <text evidence="4">Belongs to the G-alpha family.</text>
</comment>
<reference key="1">
    <citation type="journal article" date="1993" name="Proc. Natl. Acad. Sci. U.S.A.">
        <title>A Drosophila G-protein alpha subunit, Gf alpha, expressed in a spatially and temporally restricted pattern during Drosophila development.</title>
        <authorList>
            <person name="Quan F."/>
            <person name="Wolfgang W.J."/>
            <person name="Forte M.A."/>
        </authorList>
    </citation>
    <scope>NUCLEOTIDE SEQUENCE [MRNA]</scope>
    <scope>TISSUE SPECIFICITY</scope>
    <scope>DEVELOPMENTAL STAGE</scope>
    <source>
        <strain>Canton-S</strain>
        <tissue>Head</tissue>
    </source>
</reference>
<reference key="2">
    <citation type="journal article" date="2000" name="Science">
        <title>The genome sequence of Drosophila melanogaster.</title>
        <authorList>
            <person name="Adams M.D."/>
            <person name="Celniker S.E."/>
            <person name="Holt R.A."/>
            <person name="Evans C.A."/>
            <person name="Gocayne J.D."/>
            <person name="Amanatides P.G."/>
            <person name="Scherer S.E."/>
            <person name="Li P.W."/>
            <person name="Hoskins R.A."/>
            <person name="Galle R.F."/>
            <person name="George R.A."/>
            <person name="Lewis S.E."/>
            <person name="Richards S."/>
            <person name="Ashburner M."/>
            <person name="Henderson S.N."/>
            <person name="Sutton G.G."/>
            <person name="Wortman J.R."/>
            <person name="Yandell M.D."/>
            <person name="Zhang Q."/>
            <person name="Chen L.X."/>
            <person name="Brandon R.C."/>
            <person name="Rogers Y.-H.C."/>
            <person name="Blazej R.G."/>
            <person name="Champe M."/>
            <person name="Pfeiffer B.D."/>
            <person name="Wan K.H."/>
            <person name="Doyle C."/>
            <person name="Baxter E.G."/>
            <person name="Helt G."/>
            <person name="Nelson C.R."/>
            <person name="Miklos G.L.G."/>
            <person name="Abril J.F."/>
            <person name="Agbayani A."/>
            <person name="An H.-J."/>
            <person name="Andrews-Pfannkoch C."/>
            <person name="Baldwin D."/>
            <person name="Ballew R.M."/>
            <person name="Basu A."/>
            <person name="Baxendale J."/>
            <person name="Bayraktaroglu L."/>
            <person name="Beasley E.M."/>
            <person name="Beeson K.Y."/>
            <person name="Benos P.V."/>
            <person name="Berman B.P."/>
            <person name="Bhandari D."/>
            <person name="Bolshakov S."/>
            <person name="Borkova D."/>
            <person name="Botchan M.R."/>
            <person name="Bouck J."/>
            <person name="Brokstein P."/>
            <person name="Brottier P."/>
            <person name="Burtis K.C."/>
            <person name="Busam D.A."/>
            <person name="Butler H."/>
            <person name="Cadieu E."/>
            <person name="Center A."/>
            <person name="Chandra I."/>
            <person name="Cherry J.M."/>
            <person name="Cawley S."/>
            <person name="Dahlke C."/>
            <person name="Davenport L.B."/>
            <person name="Davies P."/>
            <person name="de Pablos B."/>
            <person name="Delcher A."/>
            <person name="Deng Z."/>
            <person name="Mays A.D."/>
            <person name="Dew I."/>
            <person name="Dietz S.M."/>
            <person name="Dodson K."/>
            <person name="Doup L.E."/>
            <person name="Downes M."/>
            <person name="Dugan-Rocha S."/>
            <person name="Dunkov B.C."/>
            <person name="Dunn P."/>
            <person name="Durbin K.J."/>
            <person name="Evangelista C.C."/>
            <person name="Ferraz C."/>
            <person name="Ferriera S."/>
            <person name="Fleischmann W."/>
            <person name="Fosler C."/>
            <person name="Gabrielian A.E."/>
            <person name="Garg N.S."/>
            <person name="Gelbart W.M."/>
            <person name="Glasser K."/>
            <person name="Glodek A."/>
            <person name="Gong F."/>
            <person name="Gorrell J.H."/>
            <person name="Gu Z."/>
            <person name="Guan P."/>
            <person name="Harris M."/>
            <person name="Harris N.L."/>
            <person name="Harvey D.A."/>
            <person name="Heiman T.J."/>
            <person name="Hernandez J.R."/>
            <person name="Houck J."/>
            <person name="Hostin D."/>
            <person name="Houston K.A."/>
            <person name="Howland T.J."/>
            <person name="Wei M.-H."/>
            <person name="Ibegwam C."/>
            <person name="Jalali M."/>
            <person name="Kalush F."/>
            <person name="Karpen G.H."/>
            <person name="Ke Z."/>
            <person name="Kennison J.A."/>
            <person name="Ketchum K.A."/>
            <person name="Kimmel B.E."/>
            <person name="Kodira C.D."/>
            <person name="Kraft C.L."/>
            <person name="Kravitz S."/>
            <person name="Kulp D."/>
            <person name="Lai Z."/>
            <person name="Lasko P."/>
            <person name="Lei Y."/>
            <person name="Levitsky A.A."/>
            <person name="Li J.H."/>
            <person name="Li Z."/>
            <person name="Liang Y."/>
            <person name="Lin X."/>
            <person name="Liu X."/>
            <person name="Mattei B."/>
            <person name="McIntosh T.C."/>
            <person name="McLeod M.P."/>
            <person name="McPherson D."/>
            <person name="Merkulov G."/>
            <person name="Milshina N.V."/>
            <person name="Mobarry C."/>
            <person name="Morris J."/>
            <person name="Moshrefi A."/>
            <person name="Mount S.M."/>
            <person name="Moy M."/>
            <person name="Murphy B."/>
            <person name="Murphy L."/>
            <person name="Muzny D.M."/>
            <person name="Nelson D.L."/>
            <person name="Nelson D.R."/>
            <person name="Nelson K.A."/>
            <person name="Nixon K."/>
            <person name="Nusskern D.R."/>
            <person name="Pacleb J.M."/>
            <person name="Palazzolo M."/>
            <person name="Pittman G.S."/>
            <person name="Pan S."/>
            <person name="Pollard J."/>
            <person name="Puri V."/>
            <person name="Reese M.G."/>
            <person name="Reinert K."/>
            <person name="Remington K."/>
            <person name="Saunders R.D.C."/>
            <person name="Scheeler F."/>
            <person name="Shen H."/>
            <person name="Shue B.C."/>
            <person name="Siden-Kiamos I."/>
            <person name="Simpson M."/>
            <person name="Skupski M.P."/>
            <person name="Smith T.J."/>
            <person name="Spier E."/>
            <person name="Spradling A.C."/>
            <person name="Stapleton M."/>
            <person name="Strong R."/>
            <person name="Sun E."/>
            <person name="Svirskas R."/>
            <person name="Tector C."/>
            <person name="Turner R."/>
            <person name="Venter E."/>
            <person name="Wang A.H."/>
            <person name="Wang X."/>
            <person name="Wang Z.-Y."/>
            <person name="Wassarman D.A."/>
            <person name="Weinstock G.M."/>
            <person name="Weissenbach J."/>
            <person name="Williams S.M."/>
            <person name="Woodage T."/>
            <person name="Worley K.C."/>
            <person name="Wu D."/>
            <person name="Yang S."/>
            <person name="Yao Q.A."/>
            <person name="Ye J."/>
            <person name="Yeh R.-F."/>
            <person name="Zaveri J.S."/>
            <person name="Zhan M."/>
            <person name="Zhang G."/>
            <person name="Zhao Q."/>
            <person name="Zheng L."/>
            <person name="Zheng X.H."/>
            <person name="Zhong F.N."/>
            <person name="Zhong W."/>
            <person name="Zhou X."/>
            <person name="Zhu S.C."/>
            <person name="Zhu X."/>
            <person name="Smith H.O."/>
            <person name="Gibbs R.A."/>
            <person name="Myers E.W."/>
            <person name="Rubin G.M."/>
            <person name="Venter J.C."/>
        </authorList>
    </citation>
    <scope>NUCLEOTIDE SEQUENCE [LARGE SCALE GENOMIC DNA]</scope>
    <source>
        <strain>Berkeley</strain>
    </source>
</reference>
<reference key="3">
    <citation type="journal article" date="2002" name="Genome Biol.">
        <title>Annotation of the Drosophila melanogaster euchromatic genome: a systematic review.</title>
        <authorList>
            <person name="Misra S."/>
            <person name="Crosby M.A."/>
            <person name="Mungall C.J."/>
            <person name="Matthews B.B."/>
            <person name="Campbell K.S."/>
            <person name="Hradecky P."/>
            <person name="Huang Y."/>
            <person name="Kaminker J.S."/>
            <person name="Millburn G.H."/>
            <person name="Prochnik S.E."/>
            <person name="Smith C.D."/>
            <person name="Tupy J.L."/>
            <person name="Whitfield E.J."/>
            <person name="Bayraktaroglu L."/>
            <person name="Berman B.P."/>
            <person name="Bettencourt B.R."/>
            <person name="Celniker S.E."/>
            <person name="de Grey A.D.N.J."/>
            <person name="Drysdale R.A."/>
            <person name="Harris N.L."/>
            <person name="Richter J."/>
            <person name="Russo S."/>
            <person name="Schroeder A.J."/>
            <person name="Shu S.Q."/>
            <person name="Stapleton M."/>
            <person name="Yamada C."/>
            <person name="Ashburner M."/>
            <person name="Gelbart W.M."/>
            <person name="Rubin G.M."/>
            <person name="Lewis S.E."/>
        </authorList>
    </citation>
    <scope>GENOME REANNOTATION</scope>
    <source>
        <strain>Berkeley</strain>
    </source>
</reference>
<reference key="4">
    <citation type="submission" date="2009-02" db="EMBL/GenBank/DDBJ databases">
        <authorList>
            <person name="Carlson J.W."/>
            <person name="Booth B."/>
            <person name="Frise E."/>
            <person name="Sandler J."/>
            <person name="Wan K.H."/>
            <person name="Yu C."/>
            <person name="Celniker S.E."/>
        </authorList>
    </citation>
    <scope>NUCLEOTIDE SEQUENCE [LARGE SCALE MRNA]</scope>
    <source>
        <strain>Berkeley</strain>
    </source>
</reference>
<organism>
    <name type="scientific">Drosophila melanogaster</name>
    <name type="common">Fruit fly</name>
    <dbReference type="NCBI Taxonomy" id="7227"/>
    <lineage>
        <taxon>Eukaryota</taxon>
        <taxon>Metazoa</taxon>
        <taxon>Ecdysozoa</taxon>
        <taxon>Arthropoda</taxon>
        <taxon>Hexapoda</taxon>
        <taxon>Insecta</taxon>
        <taxon>Pterygota</taxon>
        <taxon>Neoptera</taxon>
        <taxon>Endopterygota</taxon>
        <taxon>Diptera</taxon>
        <taxon>Brachycera</taxon>
        <taxon>Muscomorpha</taxon>
        <taxon>Ephydroidea</taxon>
        <taxon>Drosophilidae</taxon>
        <taxon>Drosophila</taxon>
        <taxon>Sophophora</taxon>
    </lineage>
</organism>
<name>GNAF_DROME</name>